<proteinExistence type="evidence at transcript level"/>
<keyword id="KW-0217">Developmental protein</keyword>
<keyword id="KW-0256">Endoplasmic reticulum</keyword>
<keyword id="KW-0275">Fatty acid biosynthesis</keyword>
<keyword id="KW-0276">Fatty acid metabolism</keyword>
<keyword id="KW-0325">Glycoprotein</keyword>
<keyword id="KW-0444">Lipid biosynthesis</keyword>
<keyword id="KW-0443">Lipid metabolism</keyword>
<keyword id="KW-0456">Lyase</keyword>
<keyword id="KW-0472">Membrane</keyword>
<keyword id="KW-1185">Reference proteome</keyword>
<keyword id="KW-0812">Transmembrane</keyword>
<keyword id="KW-1133">Transmembrane helix</keyword>
<organism>
    <name type="scientific">Mus musculus</name>
    <name type="common">Mouse</name>
    <dbReference type="NCBI Taxonomy" id="10090"/>
    <lineage>
        <taxon>Eukaryota</taxon>
        <taxon>Metazoa</taxon>
        <taxon>Chordata</taxon>
        <taxon>Craniata</taxon>
        <taxon>Vertebrata</taxon>
        <taxon>Euteleostomi</taxon>
        <taxon>Mammalia</taxon>
        <taxon>Eutheria</taxon>
        <taxon>Euarchontoglires</taxon>
        <taxon>Glires</taxon>
        <taxon>Rodentia</taxon>
        <taxon>Myomorpha</taxon>
        <taxon>Muroidea</taxon>
        <taxon>Muridae</taxon>
        <taxon>Murinae</taxon>
        <taxon>Mus</taxon>
        <taxon>Mus</taxon>
    </lineage>
</organism>
<protein>
    <recommendedName>
        <fullName evidence="5">Very-long-chain (3R)-3-hydroxyacyl-CoA dehydratase 1</fullName>
        <ecNumber evidence="1">4.2.1.134</ecNumber>
    </recommendedName>
    <alternativeName>
        <fullName evidence="5">3-hydroxyacyl-CoA dehydratase 1</fullName>
        <shortName evidence="5">HACD1</shortName>
    </alternativeName>
    <alternativeName>
        <fullName evidence="6">Protein-tyrosine phosphatase-like member A</fullName>
    </alternativeName>
</protein>
<comment type="catalytic activity">
    <reaction evidence="1">
        <text>a very-long-chain (3R)-3-hydroxyacyl-CoA = a very-long-chain (2E)-enoyl-CoA + H2O</text>
        <dbReference type="Rhea" id="RHEA:45812"/>
        <dbReference type="ChEBI" id="CHEBI:15377"/>
        <dbReference type="ChEBI" id="CHEBI:83728"/>
        <dbReference type="ChEBI" id="CHEBI:85440"/>
        <dbReference type="EC" id="4.2.1.134"/>
    </reaction>
    <physiologicalReaction direction="left-to-right" evidence="1">
        <dbReference type="Rhea" id="RHEA:45813"/>
    </physiologicalReaction>
</comment>
<comment type="catalytic activity">
    <reaction evidence="1">
        <text>(3R)-hydroxyhexadecanoyl-CoA = (2E)-hexadecenoyl-CoA + H2O</text>
        <dbReference type="Rhea" id="RHEA:39159"/>
        <dbReference type="ChEBI" id="CHEBI:15377"/>
        <dbReference type="ChEBI" id="CHEBI:61526"/>
        <dbReference type="ChEBI" id="CHEBI:74278"/>
    </reaction>
    <physiologicalReaction direction="left-to-right" evidence="1">
        <dbReference type="Rhea" id="RHEA:39160"/>
    </physiologicalReaction>
</comment>
<comment type="catalytic activity">
    <reaction evidence="1">
        <text>(3R)-hydroxyoctadecanoyl-CoA = (2E)-octadecenoyl-CoA + H2O</text>
        <dbReference type="Rhea" id="RHEA:39155"/>
        <dbReference type="ChEBI" id="CHEBI:15377"/>
        <dbReference type="ChEBI" id="CHEBI:71412"/>
        <dbReference type="ChEBI" id="CHEBI:76374"/>
    </reaction>
    <physiologicalReaction direction="left-to-right" evidence="1">
        <dbReference type="Rhea" id="RHEA:39156"/>
    </physiologicalReaction>
</comment>
<comment type="catalytic activity">
    <reaction evidence="1">
        <text>(3R)-hydroxyeicosanoyl-CoA = (2E)-eicosenoyl-CoA + H2O</text>
        <dbReference type="Rhea" id="RHEA:39175"/>
        <dbReference type="ChEBI" id="CHEBI:15377"/>
        <dbReference type="ChEBI" id="CHEBI:74691"/>
        <dbReference type="ChEBI" id="CHEBI:76373"/>
    </reaction>
    <physiologicalReaction direction="left-to-right" evidence="1">
        <dbReference type="Rhea" id="RHEA:39176"/>
    </physiologicalReaction>
</comment>
<comment type="catalytic activity">
    <reaction evidence="1">
        <text>(3R)-hydroxydocosanoyl-CoA = (2E)-docosenoyl-CoA + H2O</text>
        <dbReference type="Rhea" id="RHEA:39187"/>
        <dbReference type="ChEBI" id="CHEBI:15377"/>
        <dbReference type="ChEBI" id="CHEBI:74692"/>
        <dbReference type="ChEBI" id="CHEBI:76375"/>
    </reaction>
    <physiologicalReaction direction="left-to-right" evidence="1">
        <dbReference type="Rhea" id="RHEA:39188"/>
    </physiologicalReaction>
</comment>
<comment type="catalytic activity">
    <reaction evidence="1">
        <text>(3R)-hydroxytetracosanoyl-CoA = (2E)-tetracosenoyl-CoA + H2O</text>
        <dbReference type="Rhea" id="RHEA:39199"/>
        <dbReference type="ChEBI" id="CHEBI:15377"/>
        <dbReference type="ChEBI" id="CHEBI:74693"/>
        <dbReference type="ChEBI" id="CHEBI:76377"/>
    </reaction>
    <physiologicalReaction direction="left-to-right" evidence="1">
        <dbReference type="Rhea" id="RHEA:39200"/>
    </physiologicalReaction>
</comment>
<comment type="catalytic activity">
    <reaction evidence="1">
        <text>(3R)-hydroxyhexacosanoyl-CoA = (2E)-hexacosenoyl-CoA + H2O</text>
        <dbReference type="Rhea" id="RHEA:39211"/>
        <dbReference type="ChEBI" id="CHEBI:15377"/>
        <dbReference type="ChEBI" id="CHEBI:74281"/>
        <dbReference type="ChEBI" id="CHEBI:76378"/>
    </reaction>
    <physiologicalReaction direction="left-to-right" evidence="1">
        <dbReference type="Rhea" id="RHEA:39212"/>
    </physiologicalReaction>
</comment>
<comment type="pathway">
    <text evidence="1">Lipid metabolism; fatty acid biosynthesis.</text>
</comment>
<comment type="subunit">
    <text evidence="1">May interact with enzymes of the ELO family (including ELOVL1); with those enzymes that mediate condensation, the first of the four steps of the reaction cycle responsible for fatty acids elongation, may be part of a larger fatty acids elongase complex. Interacts with TECR (By similarity).</text>
</comment>
<comment type="subcellular location">
    <subcellularLocation>
        <location evidence="1">Endoplasmic reticulum membrane</location>
        <topology evidence="1">Multi-pass membrane protein</topology>
    </subcellularLocation>
</comment>
<comment type="tissue specificity">
    <text evidence="4">Expressed at high levels in heart, skeletal muscle and testis, weak expression in kidney and liver.</text>
</comment>
<comment type="developmental stage">
    <text>Differentially expressed during embryogenesis. First detected throughout the somites at 8.5 dpc and in the myotome at 11.5 dpc. Expression was observed in muscles ventral to the developing vertebral column of the neck, thorax, abdomen and tail. Expression was maintained in skeletal muscle types well after the terminal differentiation of muscle fibers. During cardiac development, expression was restricted to the myocytes of the primitive heart tube, and by 10.5 dpc, it was expressed in the muscles throughout all the cardiac chambers. At this last stage it is also detected in the hepatic primordia, and later in embryonic liver. By 15.5 expression was also observed in the smooth muscle surrounding the digestive, respiratory and urogenital tracts.</text>
</comment>
<comment type="PTM">
    <text evidence="1">N-glycosylated.</text>
</comment>
<comment type="similarity">
    <text evidence="5">Belongs to the very long-chain fatty acids dehydratase HACD family.</text>
</comment>
<comment type="caution">
    <text evidence="1">Shares some similarity with tyrosine phosphatase proteins but it has probably no phosphatase activity.</text>
</comment>
<sequence length="281" mass="32327">MGKGDWRQGRVEMPCAHVSRLHKTCVQVRVRVTMASSEEDGTNGASEASDEKEAAGKRRRLGLLATAWLTFYNIAMTAGWLVLAIAMVRFYMEKGTHRGLYKSIQKTLKFFQTFALLEVVHCLIGIVPTSVLVTGVQVSSRIFMVWLITHSIKPIQNEESVVLFLVSWTVTEITRYSFYTFSLLDHLPHFIKWARYNLFIILYPVGVAGELLTIYAALPYVKKSGMFSVRLPNKYNVSFDYYYFLLITMASYIPLFPQLYFHMLRQRRKVLHGEVIAEKDD</sequence>
<dbReference type="EC" id="4.2.1.134" evidence="1"/>
<dbReference type="EMBL" id="AF114493">
    <property type="protein sequence ID" value="AAF21975.1"/>
    <property type="molecule type" value="mRNA"/>
</dbReference>
<dbReference type="EMBL" id="AL844560">
    <property type="status" value="NOT_ANNOTATED_CDS"/>
    <property type="molecule type" value="Genomic_DNA"/>
</dbReference>
<dbReference type="EMBL" id="AK010119">
    <property type="protein sequence ID" value="BAB26713.1"/>
    <property type="molecule type" value="mRNA"/>
</dbReference>
<dbReference type="RefSeq" id="NP_038963.3">
    <property type="nucleotide sequence ID" value="NM_013935.3"/>
</dbReference>
<dbReference type="FunCoup" id="Q9QY80">
    <property type="interactions" value="819"/>
</dbReference>
<dbReference type="IntAct" id="Q9QY80">
    <property type="interactions" value="1"/>
</dbReference>
<dbReference type="STRING" id="10090.ENSMUSP00000110401"/>
<dbReference type="GlyCosmos" id="Q9QY80">
    <property type="glycosylation" value="1 site, No reported glycans"/>
</dbReference>
<dbReference type="GlyGen" id="Q9QY80">
    <property type="glycosylation" value="1 site"/>
</dbReference>
<dbReference type="iPTMnet" id="Q9QY80"/>
<dbReference type="PhosphoSitePlus" id="Q9QY80"/>
<dbReference type="jPOST" id="Q9QY80"/>
<dbReference type="PaxDb" id="10090-ENSMUSP00000110401"/>
<dbReference type="ProteomicsDB" id="270930"/>
<dbReference type="DNASU" id="30963"/>
<dbReference type="GeneID" id="30963"/>
<dbReference type="KEGG" id="mmu:30963"/>
<dbReference type="UCSC" id="uc008ikd.1">
    <property type="organism name" value="mouse"/>
</dbReference>
<dbReference type="AGR" id="MGI:1353592"/>
<dbReference type="CTD" id="9200"/>
<dbReference type="MGI" id="MGI:1353592">
    <property type="gene designation" value="Hacd1"/>
</dbReference>
<dbReference type="eggNOG" id="KOG3187">
    <property type="taxonomic scope" value="Eukaryota"/>
</dbReference>
<dbReference type="InParanoid" id="Q9QY80"/>
<dbReference type="OrthoDB" id="46988at2759"/>
<dbReference type="Reactome" id="R-MMU-75876">
    <property type="pathway name" value="Synthesis of very long-chain fatty acyl-CoAs"/>
</dbReference>
<dbReference type="UniPathway" id="UPA00094"/>
<dbReference type="BioGRID-ORCS" id="30963">
    <property type="hits" value="3 hits in 76 CRISPR screens"/>
</dbReference>
<dbReference type="ChiTaRS" id="Hacd1">
    <property type="organism name" value="mouse"/>
</dbReference>
<dbReference type="PRO" id="PR:Q9QY80"/>
<dbReference type="Proteomes" id="UP000000589">
    <property type="component" value="Unplaced"/>
</dbReference>
<dbReference type="RNAct" id="Q9QY80">
    <property type="molecule type" value="protein"/>
</dbReference>
<dbReference type="GO" id="GO:0005783">
    <property type="term" value="C:endoplasmic reticulum"/>
    <property type="evidence" value="ECO:0000250"/>
    <property type="project" value="UniProtKB"/>
</dbReference>
<dbReference type="GO" id="GO:0005789">
    <property type="term" value="C:endoplasmic reticulum membrane"/>
    <property type="evidence" value="ECO:0007669"/>
    <property type="project" value="UniProtKB-SubCell"/>
</dbReference>
<dbReference type="GO" id="GO:0019899">
    <property type="term" value="F:enzyme binding"/>
    <property type="evidence" value="ECO:0000250"/>
    <property type="project" value="UniProtKB"/>
</dbReference>
<dbReference type="GO" id="GO:0102158">
    <property type="term" value="F:very-long-chain (3R)-3-hydroxyacyl-CoA dehydratase activity"/>
    <property type="evidence" value="ECO:0000250"/>
    <property type="project" value="UniProtKB"/>
</dbReference>
<dbReference type="GO" id="GO:0030497">
    <property type="term" value="P:fatty acid elongation"/>
    <property type="evidence" value="ECO:0000250"/>
    <property type="project" value="UniProtKB"/>
</dbReference>
<dbReference type="GO" id="GO:0014902">
    <property type="term" value="P:myotube differentiation"/>
    <property type="evidence" value="ECO:0000316"/>
    <property type="project" value="MGI"/>
</dbReference>
<dbReference type="GO" id="GO:2000045">
    <property type="term" value="P:regulation of G1/S transition of mitotic cell cycle"/>
    <property type="evidence" value="ECO:0000315"/>
    <property type="project" value="MGI"/>
</dbReference>
<dbReference type="GO" id="GO:0010389">
    <property type="term" value="P:regulation of G2/M transition of mitotic cell cycle"/>
    <property type="evidence" value="ECO:0000315"/>
    <property type="project" value="MGI"/>
</dbReference>
<dbReference type="GO" id="GO:0030148">
    <property type="term" value="P:sphingolipid biosynthetic process"/>
    <property type="evidence" value="ECO:0000250"/>
    <property type="project" value="UniProtKB"/>
</dbReference>
<dbReference type="GO" id="GO:0042761">
    <property type="term" value="P:very long-chain fatty acid biosynthetic process"/>
    <property type="evidence" value="ECO:0000250"/>
    <property type="project" value="UniProtKB"/>
</dbReference>
<dbReference type="InterPro" id="IPR007482">
    <property type="entry name" value="Tyr_Pase-like_PTPLA"/>
</dbReference>
<dbReference type="PANTHER" id="PTHR11035">
    <property type="entry name" value="VERY-LONG-CHAIN (3R)-3-HYDROXYACYL-COA DEHYDRATASE"/>
    <property type="match status" value="1"/>
</dbReference>
<dbReference type="PANTHER" id="PTHR11035:SF22">
    <property type="entry name" value="VERY-LONG-CHAIN (3R)-3-HYDROXYACYL-COA DEHYDRATASE 1"/>
    <property type="match status" value="1"/>
</dbReference>
<dbReference type="Pfam" id="PF04387">
    <property type="entry name" value="PTPLA"/>
    <property type="match status" value="1"/>
</dbReference>
<gene>
    <name evidence="6" type="primary">Hacd1</name>
    <name type="synonym">Ptpla</name>
</gene>
<name>HACD1_MOUSE</name>
<evidence type="ECO:0000250" key="1">
    <source>
        <dbReference type="UniProtKB" id="B0YJ81"/>
    </source>
</evidence>
<evidence type="ECO:0000250" key="2">
    <source>
        <dbReference type="UniProtKB" id="P40857"/>
    </source>
</evidence>
<evidence type="ECO:0000255" key="3"/>
<evidence type="ECO:0000269" key="4">
    <source>
    </source>
</evidence>
<evidence type="ECO:0000305" key="5"/>
<evidence type="ECO:0000312" key="6">
    <source>
        <dbReference type="MGI" id="MGI:1353592"/>
    </source>
</evidence>
<accession>Q9QY80</accession>
<accession>Q9D6P7</accession>
<reference key="1">
    <citation type="journal article" date="1999" name="Genomics">
        <title>Molecular cloning, chromosomal mapping, and developmental expression of a novel protein tyrosine phosphatase-like gene.</title>
        <authorList>
            <person name="Uwanogho D.A."/>
            <person name="Hardcastle Z."/>
            <person name="Balogh P."/>
            <person name="Mirza G."/>
            <person name="Thornburg K.L."/>
            <person name="Ragoussis J."/>
            <person name="Sharpe P.T."/>
        </authorList>
    </citation>
    <scope>NUCLEOTIDE SEQUENCE [MRNA]</scope>
    <scope>TISSUE SPECIFICITY</scope>
    <scope>DEVELOPMENTAL EXPRESSION</scope>
</reference>
<reference key="2">
    <citation type="journal article" date="2009" name="PLoS Biol.">
        <title>Lineage-specific biology revealed by a finished genome assembly of the mouse.</title>
        <authorList>
            <person name="Church D.M."/>
            <person name="Goodstadt L."/>
            <person name="Hillier L.W."/>
            <person name="Zody M.C."/>
            <person name="Goldstein S."/>
            <person name="She X."/>
            <person name="Bult C.J."/>
            <person name="Agarwala R."/>
            <person name="Cherry J.L."/>
            <person name="DiCuccio M."/>
            <person name="Hlavina W."/>
            <person name="Kapustin Y."/>
            <person name="Meric P."/>
            <person name="Maglott D."/>
            <person name="Birtle Z."/>
            <person name="Marques A.C."/>
            <person name="Graves T."/>
            <person name="Zhou S."/>
            <person name="Teague B."/>
            <person name="Potamousis K."/>
            <person name="Churas C."/>
            <person name="Place M."/>
            <person name="Herschleb J."/>
            <person name="Runnheim R."/>
            <person name="Forrest D."/>
            <person name="Amos-Landgraf J."/>
            <person name="Schwartz D.C."/>
            <person name="Cheng Z."/>
            <person name="Lindblad-Toh K."/>
            <person name="Eichler E.E."/>
            <person name="Ponting C.P."/>
        </authorList>
    </citation>
    <scope>NUCLEOTIDE SEQUENCE [LARGE SCALE GENOMIC DNA]</scope>
    <source>
        <strain>C57BL/6J</strain>
    </source>
</reference>
<reference key="3">
    <citation type="journal article" date="2002" name="Nature">
        <title>Analysis of the mouse transcriptome based on functional annotation of 60,770 full-length cDNAs.</title>
        <authorList>
            <person name="Okazaki Y."/>
            <person name="Furuno M."/>
            <person name="Kasukawa T."/>
            <person name="Adachi J."/>
            <person name="Bono H."/>
            <person name="Kondo S."/>
            <person name="Nikaido I."/>
            <person name="Osato N."/>
            <person name="Saito R."/>
            <person name="Suzuki H."/>
            <person name="Yamanaka I."/>
            <person name="Kiyosawa H."/>
            <person name="Yagi K."/>
            <person name="Tomaru Y."/>
            <person name="Hasegawa Y."/>
            <person name="Nogami A."/>
            <person name="Schonbach C."/>
            <person name="Gojobori T."/>
            <person name="Baldarelli R."/>
            <person name="Hill D.P."/>
            <person name="Bult C."/>
            <person name="Hume D.A."/>
            <person name="Quackenbush J."/>
            <person name="Schriml L.M."/>
            <person name="Kanapin A."/>
            <person name="Matsuda H."/>
            <person name="Batalov S."/>
            <person name="Beisel K.W."/>
            <person name="Blake J.A."/>
            <person name="Bradt D."/>
            <person name="Brusic V."/>
            <person name="Chothia C."/>
            <person name="Corbani L.E."/>
            <person name="Cousins S."/>
            <person name="Dalla E."/>
            <person name="Dragani T.A."/>
            <person name="Fletcher C.F."/>
            <person name="Forrest A."/>
            <person name="Frazer K.S."/>
            <person name="Gaasterland T."/>
            <person name="Gariboldi M."/>
            <person name="Gissi C."/>
            <person name="Godzik A."/>
            <person name="Gough J."/>
            <person name="Grimmond S."/>
            <person name="Gustincich S."/>
            <person name="Hirokawa N."/>
            <person name="Jackson I.J."/>
            <person name="Jarvis E.D."/>
            <person name="Kanai A."/>
            <person name="Kawaji H."/>
            <person name="Kawasawa Y."/>
            <person name="Kedzierski R.M."/>
            <person name="King B.L."/>
            <person name="Konagaya A."/>
            <person name="Kurochkin I.V."/>
            <person name="Lee Y."/>
            <person name="Lenhard B."/>
            <person name="Lyons P.A."/>
            <person name="Maglott D.R."/>
            <person name="Maltais L."/>
            <person name="Marchionni L."/>
            <person name="McKenzie L."/>
            <person name="Miki H."/>
            <person name="Nagashima T."/>
            <person name="Numata K."/>
            <person name="Okido T."/>
            <person name="Pavan W.J."/>
            <person name="Pertea G."/>
            <person name="Pesole G."/>
            <person name="Petrovsky N."/>
            <person name="Pillai R."/>
            <person name="Pontius J.U."/>
            <person name="Qi D."/>
            <person name="Ramachandran S."/>
            <person name="Ravasi T."/>
            <person name="Reed J.C."/>
            <person name="Reed D.J."/>
            <person name="Reid J."/>
            <person name="Ring B.Z."/>
            <person name="Ringwald M."/>
            <person name="Sandelin A."/>
            <person name="Schneider C."/>
            <person name="Semple C.A."/>
            <person name="Setou M."/>
            <person name="Shimada K."/>
            <person name="Sultana R."/>
            <person name="Takenaka Y."/>
            <person name="Taylor M.S."/>
            <person name="Teasdale R.D."/>
            <person name="Tomita M."/>
            <person name="Verardo R."/>
            <person name="Wagner L."/>
            <person name="Wahlestedt C."/>
            <person name="Wang Y."/>
            <person name="Watanabe Y."/>
            <person name="Wells C."/>
            <person name="Wilming L.G."/>
            <person name="Wynshaw-Boris A."/>
            <person name="Yanagisawa M."/>
            <person name="Yang I."/>
            <person name="Yang L."/>
            <person name="Yuan Z."/>
            <person name="Zavolan M."/>
            <person name="Zhu Y."/>
            <person name="Zimmer A."/>
            <person name="Carninci P."/>
            <person name="Hayatsu N."/>
            <person name="Hirozane-Kishikawa T."/>
            <person name="Konno H."/>
            <person name="Nakamura M."/>
            <person name="Sakazume N."/>
            <person name="Sato K."/>
            <person name="Shiraki T."/>
            <person name="Waki K."/>
            <person name="Kawai J."/>
            <person name="Aizawa K."/>
            <person name="Arakawa T."/>
            <person name="Fukuda S."/>
            <person name="Hara A."/>
            <person name="Hashizume W."/>
            <person name="Imotani K."/>
            <person name="Ishii Y."/>
            <person name="Itoh M."/>
            <person name="Kagawa I."/>
            <person name="Miyazaki A."/>
            <person name="Sakai K."/>
            <person name="Sasaki D."/>
            <person name="Shibata K."/>
            <person name="Shinagawa A."/>
            <person name="Yasunishi A."/>
            <person name="Yoshino M."/>
            <person name="Waterston R."/>
            <person name="Lander E.S."/>
            <person name="Rogers J."/>
            <person name="Birney E."/>
            <person name="Hayashizaki Y."/>
        </authorList>
    </citation>
    <scope>NUCLEOTIDE SEQUENCE [LARGE SCALE MRNA] OF 34-281</scope>
    <source>
        <strain>C57BL/6J</strain>
        <tissue>Tongue</tissue>
    </source>
</reference>
<feature type="chain" id="PRO_0000349316" description="Very-long-chain (3R)-3-hydroxyacyl-CoA dehydratase 1">
    <location>
        <begin position="1"/>
        <end position="281"/>
    </location>
</feature>
<feature type="topological domain" description="Cytoplasmic" evidence="3">
    <location>
        <begin position="1"/>
        <end position="68"/>
    </location>
</feature>
<feature type="transmembrane region" description="Helical" evidence="3">
    <location>
        <begin position="69"/>
        <end position="88"/>
    </location>
</feature>
<feature type="topological domain" description="Lumenal" evidence="3">
    <location>
        <begin position="89"/>
        <end position="107"/>
    </location>
</feature>
<feature type="transmembrane region" description="Helical" evidence="3">
    <location>
        <begin position="108"/>
        <end position="124"/>
    </location>
</feature>
<feature type="topological domain" description="Cytoplasmic" evidence="3">
    <location>
        <begin position="125"/>
        <end position="134"/>
    </location>
</feature>
<feature type="transmembrane region" description="Helical" evidence="3">
    <location>
        <begin position="135"/>
        <end position="152"/>
    </location>
</feature>
<feature type="topological domain" description="Lumenal" evidence="3">
    <location>
        <begin position="153"/>
        <end position="158"/>
    </location>
</feature>
<feature type="transmembrane region" description="Helical" evidence="3">
    <location>
        <begin position="159"/>
        <end position="173"/>
    </location>
</feature>
<feature type="topological domain" description="Cytoplasmic" evidence="3">
    <location>
        <begin position="174"/>
        <end position="196"/>
    </location>
</feature>
<feature type="transmembrane region" description="Helical" evidence="3">
    <location>
        <begin position="197"/>
        <end position="214"/>
    </location>
</feature>
<feature type="topological domain" description="Lumenal" evidence="3">
    <location>
        <begin position="215"/>
        <end position="244"/>
    </location>
</feature>
<feature type="transmembrane region" description="Helical" evidence="3">
    <location>
        <begin position="245"/>
        <end position="262"/>
    </location>
</feature>
<feature type="topological domain" description="Cytoplasmic" evidence="3">
    <location>
        <begin position="263"/>
        <end position="281"/>
    </location>
</feature>
<feature type="active site" evidence="2">
    <location>
        <position position="203"/>
    </location>
</feature>
<feature type="active site" evidence="2">
    <location>
        <position position="210"/>
    </location>
</feature>
<feature type="glycosylation site" description="N-linked (GlcNAc...) asparagine" evidence="3">
    <location>
        <position position="236"/>
    </location>
</feature>